<proteinExistence type="inferred from homology"/>
<evidence type="ECO:0000255" key="1">
    <source>
        <dbReference type="HAMAP-Rule" id="MF_01147"/>
    </source>
</evidence>
<comment type="function">
    <text evidence="1">Catalyzes the transfer of the diacylglyceryl group from phosphatidylglycerol to the sulfhydryl group of the N-terminal cysteine of a prolipoprotein, the first step in the formation of mature lipoproteins.</text>
</comment>
<comment type="catalytic activity">
    <reaction evidence="1">
        <text>L-cysteinyl-[prolipoprotein] + a 1,2-diacyl-sn-glycero-3-phospho-(1'-sn-glycerol) = an S-1,2-diacyl-sn-glyceryl-L-cysteinyl-[prolipoprotein] + sn-glycerol 1-phosphate + H(+)</text>
        <dbReference type="Rhea" id="RHEA:56712"/>
        <dbReference type="Rhea" id="RHEA-COMP:14679"/>
        <dbReference type="Rhea" id="RHEA-COMP:14680"/>
        <dbReference type="ChEBI" id="CHEBI:15378"/>
        <dbReference type="ChEBI" id="CHEBI:29950"/>
        <dbReference type="ChEBI" id="CHEBI:57685"/>
        <dbReference type="ChEBI" id="CHEBI:64716"/>
        <dbReference type="ChEBI" id="CHEBI:140658"/>
        <dbReference type="EC" id="2.5.1.145"/>
    </reaction>
</comment>
<comment type="pathway">
    <text evidence="1">Protein modification; lipoprotein biosynthesis (diacylglyceryl transfer).</text>
</comment>
<comment type="subcellular location">
    <subcellularLocation>
        <location evidence="1">Cell inner membrane</location>
        <topology evidence="1">Multi-pass membrane protein</topology>
    </subcellularLocation>
</comment>
<comment type="similarity">
    <text evidence="1">Belongs to the Lgt family.</text>
</comment>
<protein>
    <recommendedName>
        <fullName evidence="1">Phosphatidylglycerol--prolipoprotein diacylglyceryl transferase</fullName>
        <ecNumber evidence="1">2.5.1.145</ecNumber>
    </recommendedName>
</protein>
<keyword id="KW-0997">Cell inner membrane</keyword>
<keyword id="KW-1003">Cell membrane</keyword>
<keyword id="KW-0472">Membrane</keyword>
<keyword id="KW-1185">Reference proteome</keyword>
<keyword id="KW-0808">Transferase</keyword>
<keyword id="KW-0812">Transmembrane</keyword>
<keyword id="KW-1133">Transmembrane helix</keyword>
<organism>
    <name type="scientific">Francisella tularensis subsp. tularensis (strain SCHU S4 / Schu 4)</name>
    <dbReference type="NCBI Taxonomy" id="177416"/>
    <lineage>
        <taxon>Bacteria</taxon>
        <taxon>Pseudomonadati</taxon>
        <taxon>Pseudomonadota</taxon>
        <taxon>Gammaproteobacteria</taxon>
        <taxon>Thiotrichales</taxon>
        <taxon>Francisellaceae</taxon>
        <taxon>Francisella</taxon>
    </lineage>
</organism>
<feature type="chain" id="PRO_0000172603" description="Phosphatidylglycerol--prolipoprotein diacylglyceryl transferase">
    <location>
        <begin position="1"/>
        <end position="268"/>
    </location>
</feature>
<feature type="transmembrane region" description="Helical" evidence="1">
    <location>
        <begin position="14"/>
        <end position="34"/>
    </location>
</feature>
<feature type="transmembrane region" description="Helical" evidence="1">
    <location>
        <begin position="57"/>
        <end position="77"/>
    </location>
</feature>
<feature type="transmembrane region" description="Helical" evidence="1">
    <location>
        <begin position="90"/>
        <end position="110"/>
    </location>
</feature>
<feature type="transmembrane region" description="Helical" evidence="1">
    <location>
        <begin position="117"/>
        <end position="137"/>
    </location>
</feature>
<feature type="transmembrane region" description="Helical" evidence="1">
    <location>
        <begin position="174"/>
        <end position="194"/>
    </location>
</feature>
<feature type="transmembrane region" description="Helical" evidence="1">
    <location>
        <begin position="200"/>
        <end position="220"/>
    </location>
</feature>
<feature type="transmembrane region" description="Helical" evidence="1">
    <location>
        <begin position="240"/>
        <end position="260"/>
    </location>
</feature>
<feature type="binding site" evidence="1">
    <location>
        <position position="140"/>
    </location>
    <ligand>
        <name>a 1,2-diacyl-sn-glycero-3-phospho-(1'-sn-glycerol)</name>
        <dbReference type="ChEBI" id="CHEBI:64716"/>
    </ligand>
</feature>
<sequence length="268" mass="30574">MLQYPHINPVALQLGPIKIHWYGLMYLLGIFAGWYLTRYRAKVKPWAPIKPEQVGDLTFYVALGVILGGRIGYIIFYNLPYYFHNPSQMFFLWDGGMSFHGGFIGVLIAFALFARKIGANFFDLGEFVAPVIPIGLGAGRIGNFINGELWGKVTDSPLGMVFPTGGPLPRYPSQLFEFFFEGVVLFSVLWLVTIKKRPRYLVLGLFMFLYGCARFICEFFRQPDPQYGYIFFNWMTMGQILSIPMILLGAVILIAVFIKIRKNKCKNI</sequence>
<reference key="1">
    <citation type="journal article" date="2005" name="Nat. Genet.">
        <title>The complete genome sequence of Francisella tularensis, the causative agent of tularemia.</title>
        <authorList>
            <person name="Larsson P."/>
            <person name="Oyston P.C.F."/>
            <person name="Chain P."/>
            <person name="Chu M.C."/>
            <person name="Duffield M."/>
            <person name="Fuxelius H.-H."/>
            <person name="Garcia E."/>
            <person name="Haelltorp G."/>
            <person name="Johansson D."/>
            <person name="Isherwood K.E."/>
            <person name="Karp P.D."/>
            <person name="Larsson E."/>
            <person name="Liu Y."/>
            <person name="Michell S."/>
            <person name="Prior J."/>
            <person name="Prior R."/>
            <person name="Malfatti S."/>
            <person name="Sjoestedt A."/>
            <person name="Svensson K."/>
            <person name="Thompson N."/>
            <person name="Vergez L."/>
            <person name="Wagg J.K."/>
            <person name="Wren B.W."/>
            <person name="Lindler L.E."/>
            <person name="Andersson S.G.E."/>
            <person name="Forsman M."/>
            <person name="Titball R.W."/>
        </authorList>
    </citation>
    <scope>NUCLEOTIDE SEQUENCE [LARGE SCALE GENOMIC DNA]</scope>
    <source>
        <strain>SCHU S4 / Schu 4</strain>
    </source>
</reference>
<accession>Q5NFK6</accession>
<gene>
    <name evidence="1" type="primary">lgt</name>
    <name type="ordered locus">FTT_1228</name>
</gene>
<dbReference type="EC" id="2.5.1.145" evidence="1"/>
<dbReference type="EMBL" id="AJ749949">
    <property type="protein sequence ID" value="CAG45861.1"/>
    <property type="molecule type" value="Genomic_DNA"/>
</dbReference>
<dbReference type="RefSeq" id="WP_003021517.1">
    <property type="nucleotide sequence ID" value="NC_006570.2"/>
</dbReference>
<dbReference type="RefSeq" id="YP_170186.1">
    <property type="nucleotide sequence ID" value="NC_006570.2"/>
</dbReference>
<dbReference type="SMR" id="Q5NFK6"/>
<dbReference type="STRING" id="177416.FTT_1228"/>
<dbReference type="DNASU" id="3190760"/>
<dbReference type="EnsemblBacteria" id="CAG45861">
    <property type="protein sequence ID" value="CAG45861"/>
    <property type="gene ID" value="FTT_1228"/>
</dbReference>
<dbReference type="KEGG" id="ftu:FTT_1228"/>
<dbReference type="eggNOG" id="COG0682">
    <property type="taxonomic scope" value="Bacteria"/>
</dbReference>
<dbReference type="OrthoDB" id="871140at2"/>
<dbReference type="UniPathway" id="UPA00664"/>
<dbReference type="Proteomes" id="UP000001174">
    <property type="component" value="Chromosome"/>
</dbReference>
<dbReference type="GO" id="GO:0005886">
    <property type="term" value="C:plasma membrane"/>
    <property type="evidence" value="ECO:0007669"/>
    <property type="project" value="UniProtKB-SubCell"/>
</dbReference>
<dbReference type="GO" id="GO:0008961">
    <property type="term" value="F:phosphatidylglycerol-prolipoprotein diacylglyceryl transferase activity"/>
    <property type="evidence" value="ECO:0007669"/>
    <property type="project" value="UniProtKB-UniRule"/>
</dbReference>
<dbReference type="GO" id="GO:0042158">
    <property type="term" value="P:lipoprotein biosynthetic process"/>
    <property type="evidence" value="ECO:0007669"/>
    <property type="project" value="UniProtKB-UniRule"/>
</dbReference>
<dbReference type="HAMAP" id="MF_01147">
    <property type="entry name" value="Lgt"/>
    <property type="match status" value="1"/>
</dbReference>
<dbReference type="InterPro" id="IPR001640">
    <property type="entry name" value="Lgt"/>
</dbReference>
<dbReference type="NCBIfam" id="TIGR00544">
    <property type="entry name" value="lgt"/>
    <property type="match status" value="1"/>
</dbReference>
<dbReference type="PANTHER" id="PTHR30589:SF0">
    <property type="entry name" value="PHOSPHATIDYLGLYCEROL--PROLIPOPROTEIN DIACYLGLYCERYL TRANSFERASE"/>
    <property type="match status" value="1"/>
</dbReference>
<dbReference type="PANTHER" id="PTHR30589">
    <property type="entry name" value="PROLIPOPROTEIN DIACYLGLYCERYL TRANSFERASE"/>
    <property type="match status" value="1"/>
</dbReference>
<dbReference type="Pfam" id="PF01790">
    <property type="entry name" value="LGT"/>
    <property type="match status" value="1"/>
</dbReference>
<dbReference type="PROSITE" id="PS01311">
    <property type="entry name" value="LGT"/>
    <property type="match status" value="1"/>
</dbReference>
<name>LGT_FRATT</name>